<gene>
    <name evidence="1" type="primary">ruvC</name>
    <name type="ordered locus">SynWH7803_1601</name>
</gene>
<feature type="chain" id="PRO_1000002842" description="Crossover junction endodeoxyribonuclease RuvC">
    <location>
        <begin position="1"/>
        <end position="154"/>
    </location>
</feature>
<feature type="active site" evidence="1">
    <location>
        <position position="7"/>
    </location>
</feature>
<feature type="active site" evidence="1">
    <location>
        <position position="67"/>
    </location>
</feature>
<feature type="active site" evidence="1">
    <location>
        <position position="139"/>
    </location>
</feature>
<feature type="binding site" evidence="1">
    <location>
        <position position="7"/>
    </location>
    <ligand>
        <name>Mg(2+)</name>
        <dbReference type="ChEBI" id="CHEBI:18420"/>
        <label>1</label>
    </ligand>
</feature>
<feature type="binding site" evidence="1">
    <location>
        <position position="67"/>
    </location>
    <ligand>
        <name>Mg(2+)</name>
        <dbReference type="ChEBI" id="CHEBI:18420"/>
        <label>2</label>
    </ligand>
</feature>
<feature type="binding site" evidence="1">
    <location>
        <position position="139"/>
    </location>
    <ligand>
        <name>Mg(2+)</name>
        <dbReference type="ChEBI" id="CHEBI:18420"/>
        <label>1</label>
    </ligand>
</feature>
<reference key="1">
    <citation type="submission" date="2006-05" db="EMBL/GenBank/DDBJ databases">
        <authorList>
            <consortium name="Genoscope"/>
        </authorList>
    </citation>
    <scope>NUCLEOTIDE SEQUENCE [LARGE SCALE GENOMIC DNA]</scope>
    <source>
        <strain>WH7803</strain>
    </source>
</reference>
<keyword id="KW-0963">Cytoplasm</keyword>
<keyword id="KW-0227">DNA damage</keyword>
<keyword id="KW-0233">DNA recombination</keyword>
<keyword id="KW-0234">DNA repair</keyword>
<keyword id="KW-0238">DNA-binding</keyword>
<keyword id="KW-0255">Endonuclease</keyword>
<keyword id="KW-0378">Hydrolase</keyword>
<keyword id="KW-0460">Magnesium</keyword>
<keyword id="KW-0479">Metal-binding</keyword>
<keyword id="KW-0540">Nuclease</keyword>
<keyword id="KW-1185">Reference proteome</keyword>
<comment type="function">
    <text evidence="1">The RuvA-RuvB-RuvC complex processes Holliday junction (HJ) DNA during genetic recombination and DNA repair. Endonuclease that resolves HJ intermediates. Cleaves cruciform DNA by making single-stranded nicks across the HJ at symmetrical positions within the homologous arms, yielding a 5'-phosphate and a 3'-hydroxyl group; requires a central core of homology in the junction. The consensus cleavage sequence is 5'-(A/T)TT(C/G)-3'. Cleavage occurs on the 3'-side of the TT dinucleotide at the point of strand exchange. HJ branch migration catalyzed by RuvA-RuvB allows RuvC to scan DNA until it finds its consensus sequence, where it cleaves and resolves the cruciform DNA.</text>
</comment>
<comment type="catalytic activity">
    <reaction evidence="1">
        <text>Endonucleolytic cleavage at a junction such as a reciprocal single-stranded crossover between two homologous DNA duplexes (Holliday junction).</text>
        <dbReference type="EC" id="3.1.21.10"/>
    </reaction>
</comment>
<comment type="cofactor">
    <cofactor evidence="1">
        <name>Mg(2+)</name>
        <dbReference type="ChEBI" id="CHEBI:18420"/>
    </cofactor>
    <text evidence="1">Binds 2 Mg(2+) ion per subunit.</text>
</comment>
<comment type="subunit">
    <text evidence="1">Homodimer which binds Holliday junction (HJ) DNA. The HJ becomes 2-fold symmetrical on binding to RuvC with unstacked arms; it has a different conformation from HJ DNA in complex with RuvA. In the full resolvosome a probable DNA-RuvA(4)-RuvB(12)-RuvC(2) complex forms which resolves the HJ.</text>
</comment>
<comment type="subcellular location">
    <subcellularLocation>
        <location evidence="1">Cytoplasm</location>
    </subcellularLocation>
</comment>
<comment type="similarity">
    <text evidence="1">Belongs to the RuvC family.</text>
</comment>
<evidence type="ECO:0000255" key="1">
    <source>
        <dbReference type="HAMAP-Rule" id="MF_00034"/>
    </source>
</evidence>
<dbReference type="EC" id="3.1.21.10" evidence="1"/>
<dbReference type="EMBL" id="CT971583">
    <property type="protein sequence ID" value="CAK24027.1"/>
    <property type="molecule type" value="Genomic_DNA"/>
</dbReference>
<dbReference type="SMR" id="A5GM62"/>
<dbReference type="STRING" id="32051.SynWH7803_1601"/>
<dbReference type="KEGG" id="syx:SynWH7803_1601"/>
<dbReference type="eggNOG" id="COG0817">
    <property type="taxonomic scope" value="Bacteria"/>
</dbReference>
<dbReference type="HOGENOM" id="CLU_091257_3_1_3"/>
<dbReference type="OrthoDB" id="9805499at2"/>
<dbReference type="Proteomes" id="UP000001566">
    <property type="component" value="Chromosome"/>
</dbReference>
<dbReference type="GO" id="GO:0005737">
    <property type="term" value="C:cytoplasm"/>
    <property type="evidence" value="ECO:0007669"/>
    <property type="project" value="UniProtKB-SubCell"/>
</dbReference>
<dbReference type="GO" id="GO:0048476">
    <property type="term" value="C:Holliday junction resolvase complex"/>
    <property type="evidence" value="ECO:0007669"/>
    <property type="project" value="UniProtKB-UniRule"/>
</dbReference>
<dbReference type="GO" id="GO:0008821">
    <property type="term" value="F:crossover junction DNA endonuclease activity"/>
    <property type="evidence" value="ECO:0007669"/>
    <property type="project" value="UniProtKB-UniRule"/>
</dbReference>
<dbReference type="GO" id="GO:0003677">
    <property type="term" value="F:DNA binding"/>
    <property type="evidence" value="ECO:0007669"/>
    <property type="project" value="UniProtKB-KW"/>
</dbReference>
<dbReference type="GO" id="GO:0000287">
    <property type="term" value="F:magnesium ion binding"/>
    <property type="evidence" value="ECO:0007669"/>
    <property type="project" value="UniProtKB-UniRule"/>
</dbReference>
<dbReference type="GO" id="GO:0006310">
    <property type="term" value="P:DNA recombination"/>
    <property type="evidence" value="ECO:0007669"/>
    <property type="project" value="UniProtKB-UniRule"/>
</dbReference>
<dbReference type="GO" id="GO:0006281">
    <property type="term" value="P:DNA repair"/>
    <property type="evidence" value="ECO:0007669"/>
    <property type="project" value="UniProtKB-UniRule"/>
</dbReference>
<dbReference type="CDD" id="cd16962">
    <property type="entry name" value="RuvC"/>
    <property type="match status" value="1"/>
</dbReference>
<dbReference type="FunFam" id="3.30.420.10:FF:000002">
    <property type="entry name" value="Crossover junction endodeoxyribonuclease RuvC"/>
    <property type="match status" value="1"/>
</dbReference>
<dbReference type="Gene3D" id="3.30.420.10">
    <property type="entry name" value="Ribonuclease H-like superfamily/Ribonuclease H"/>
    <property type="match status" value="1"/>
</dbReference>
<dbReference type="HAMAP" id="MF_00034">
    <property type="entry name" value="RuvC"/>
    <property type="match status" value="1"/>
</dbReference>
<dbReference type="InterPro" id="IPR012337">
    <property type="entry name" value="RNaseH-like_sf"/>
</dbReference>
<dbReference type="InterPro" id="IPR036397">
    <property type="entry name" value="RNaseH_sf"/>
</dbReference>
<dbReference type="InterPro" id="IPR020563">
    <property type="entry name" value="X-over_junc_endoDNase_Mg_BS"/>
</dbReference>
<dbReference type="InterPro" id="IPR002176">
    <property type="entry name" value="X-over_junc_endoDNase_RuvC"/>
</dbReference>
<dbReference type="NCBIfam" id="NF000711">
    <property type="entry name" value="PRK00039.2-1"/>
    <property type="match status" value="1"/>
</dbReference>
<dbReference type="NCBIfam" id="TIGR00228">
    <property type="entry name" value="ruvC"/>
    <property type="match status" value="1"/>
</dbReference>
<dbReference type="PANTHER" id="PTHR30194">
    <property type="entry name" value="CROSSOVER JUNCTION ENDODEOXYRIBONUCLEASE RUVC"/>
    <property type="match status" value="1"/>
</dbReference>
<dbReference type="PANTHER" id="PTHR30194:SF3">
    <property type="entry name" value="CROSSOVER JUNCTION ENDODEOXYRIBONUCLEASE RUVC"/>
    <property type="match status" value="1"/>
</dbReference>
<dbReference type="Pfam" id="PF02075">
    <property type="entry name" value="RuvC"/>
    <property type="match status" value="1"/>
</dbReference>
<dbReference type="PRINTS" id="PR00696">
    <property type="entry name" value="RSOLVASERUVC"/>
</dbReference>
<dbReference type="SUPFAM" id="SSF53098">
    <property type="entry name" value="Ribonuclease H-like"/>
    <property type="match status" value="1"/>
</dbReference>
<dbReference type="PROSITE" id="PS01321">
    <property type="entry name" value="RUVC"/>
    <property type="match status" value="1"/>
</dbReference>
<organism>
    <name type="scientific">Synechococcus sp. (strain WH7803)</name>
    <dbReference type="NCBI Taxonomy" id="32051"/>
    <lineage>
        <taxon>Bacteria</taxon>
        <taxon>Bacillati</taxon>
        <taxon>Cyanobacteriota</taxon>
        <taxon>Cyanophyceae</taxon>
        <taxon>Synechococcales</taxon>
        <taxon>Synechococcaceae</taxon>
        <taxon>Synechococcus</taxon>
    </lineage>
</organism>
<proteinExistence type="inferred from homology"/>
<protein>
    <recommendedName>
        <fullName evidence="1">Crossover junction endodeoxyribonuclease RuvC</fullName>
        <ecNumber evidence="1">3.1.21.10</ecNumber>
    </recommendedName>
    <alternativeName>
        <fullName evidence="1">Holliday junction nuclease RuvC</fullName>
    </alternativeName>
    <alternativeName>
        <fullName evidence="1">Holliday junction resolvase RuvC</fullName>
    </alternativeName>
</protein>
<name>RUVC_SYNPW</name>
<accession>A5GM62</accession>
<sequence>MRILGIDPGLARVGYGVIETAGREQTMLDCGIIRTDSGRPEGERMVEIARDLRQLIRAWKPELAAVEKFFFYRSSNTIAVVQARGVVIMTLSRFGLPIVEFPPMQIKQALTGHGHADKDEVLEAVMRELSLETPPRPDDAADALAVALTGWFQR</sequence>